<dbReference type="EMBL" id="CP000789">
    <property type="protein sequence ID" value="ABU69451.1"/>
    <property type="molecule type" value="Genomic_DNA"/>
</dbReference>
<dbReference type="RefSeq" id="WP_012126662.1">
    <property type="nucleotide sequence ID" value="NC_009783.1"/>
</dbReference>
<dbReference type="SMR" id="A7N0X9"/>
<dbReference type="KEGG" id="vha:VIBHAR_00436"/>
<dbReference type="PATRIC" id="fig|338187.25.peg.2154"/>
<dbReference type="Proteomes" id="UP000008152">
    <property type="component" value="Chromosome I"/>
</dbReference>
<dbReference type="GO" id="GO:0005886">
    <property type="term" value="C:plasma membrane"/>
    <property type="evidence" value="ECO:0007669"/>
    <property type="project" value="UniProtKB-SubCell"/>
</dbReference>
<dbReference type="GO" id="GO:0032977">
    <property type="term" value="F:membrane insertase activity"/>
    <property type="evidence" value="ECO:0007669"/>
    <property type="project" value="InterPro"/>
</dbReference>
<dbReference type="GO" id="GO:0051205">
    <property type="term" value="P:protein insertion into membrane"/>
    <property type="evidence" value="ECO:0007669"/>
    <property type="project" value="TreeGrafter"/>
</dbReference>
<dbReference type="GO" id="GO:0015031">
    <property type="term" value="P:protein transport"/>
    <property type="evidence" value="ECO:0007669"/>
    <property type="project" value="UniProtKB-KW"/>
</dbReference>
<dbReference type="CDD" id="cd20070">
    <property type="entry name" value="5TM_YidC_Alb3"/>
    <property type="match status" value="1"/>
</dbReference>
<dbReference type="CDD" id="cd19961">
    <property type="entry name" value="EcYidC-like_peri"/>
    <property type="match status" value="1"/>
</dbReference>
<dbReference type="Gene3D" id="2.70.98.90">
    <property type="match status" value="1"/>
</dbReference>
<dbReference type="HAMAP" id="MF_01810">
    <property type="entry name" value="YidC_type1"/>
    <property type="match status" value="1"/>
</dbReference>
<dbReference type="InterPro" id="IPR019998">
    <property type="entry name" value="Membr_insert_YidC"/>
</dbReference>
<dbReference type="InterPro" id="IPR028053">
    <property type="entry name" value="Membr_insert_YidC_N"/>
</dbReference>
<dbReference type="InterPro" id="IPR001708">
    <property type="entry name" value="YidC/ALB3/OXA1/COX18"/>
</dbReference>
<dbReference type="InterPro" id="IPR028055">
    <property type="entry name" value="YidC/Oxa/ALB_C"/>
</dbReference>
<dbReference type="InterPro" id="IPR047196">
    <property type="entry name" value="YidC_ALB_C"/>
</dbReference>
<dbReference type="InterPro" id="IPR038221">
    <property type="entry name" value="YidC_periplasmic_sf"/>
</dbReference>
<dbReference type="NCBIfam" id="NF002351">
    <property type="entry name" value="PRK01318.1-1"/>
    <property type="match status" value="1"/>
</dbReference>
<dbReference type="NCBIfam" id="NF002352">
    <property type="entry name" value="PRK01318.1-3"/>
    <property type="match status" value="1"/>
</dbReference>
<dbReference type="NCBIfam" id="TIGR03593">
    <property type="entry name" value="yidC_nterm"/>
    <property type="match status" value="1"/>
</dbReference>
<dbReference type="NCBIfam" id="TIGR03592">
    <property type="entry name" value="yidC_oxa1_cterm"/>
    <property type="match status" value="1"/>
</dbReference>
<dbReference type="PANTHER" id="PTHR12428:SF65">
    <property type="entry name" value="CYTOCHROME C OXIDASE ASSEMBLY PROTEIN COX18, MITOCHONDRIAL"/>
    <property type="match status" value="1"/>
</dbReference>
<dbReference type="PANTHER" id="PTHR12428">
    <property type="entry name" value="OXA1"/>
    <property type="match status" value="1"/>
</dbReference>
<dbReference type="Pfam" id="PF02096">
    <property type="entry name" value="60KD_IMP"/>
    <property type="match status" value="1"/>
</dbReference>
<dbReference type="Pfam" id="PF14849">
    <property type="entry name" value="YidC_periplas"/>
    <property type="match status" value="1"/>
</dbReference>
<dbReference type="PRINTS" id="PR00701">
    <property type="entry name" value="60KDINNERMP"/>
</dbReference>
<dbReference type="PRINTS" id="PR01900">
    <property type="entry name" value="YIDCPROTEIN"/>
</dbReference>
<sequence>MDSQRNILLIALALVSFLLFQQWQVAKNPAPQAVEQAQSSSTLPAPSFADELDPVPGQQQASAKTITVTTDVLTLSIDTVGGDVVHADLNKYSAELDSSDPFVLLKDTKGHQFIAQSGLVGPQGIDLSSTNRPHYKVSADSFTLADGQDELRVPMTFTANGIEYIKTYVFKRGSYALNVEYDVVNNSGNNATFGMYAHLRQNLMDAGGSITMPTYRGGAYSTEDVRYKKYSFEDMQDRNLSINLADGQGWAAMIQHYFAAAWIPRNEPGTNLYTRVIGNLGDIGVRMPNKTIATGDQAKFEATLWVGPKLQNEMAAVAENLDLVVDYGWLWFIAKPLHSLLAFIQSFVGNWGVAIICLTFIVRGAMYPLTKAQYTSMAKMRMLQPKLQAMRERIGDDRQRMSQEMMELYKKEKVNPLGGCLPLILQMPIFIALYWALMESVELRHSPFFGWIHDLSAQDPYYILPLLMGASMFLIQKMSPTTVTDPMQQKIMTFMPVMFTFFFLFFPSGLVLYWLVSNIVTLIQQTLIYKALEKKGLHTK</sequence>
<comment type="function">
    <text evidence="1">Required for the insertion and/or proper folding and/or complex formation of integral membrane proteins into the membrane. Involved in integration of membrane proteins that insert both dependently and independently of the Sec translocase complex, as well as at least some lipoproteins. Aids folding of multispanning membrane proteins.</text>
</comment>
<comment type="subunit">
    <text evidence="1">Interacts with the Sec translocase complex via SecD. Specifically interacts with transmembrane segments of nascent integral membrane proteins during membrane integration.</text>
</comment>
<comment type="subcellular location">
    <subcellularLocation>
        <location evidence="1">Cell inner membrane</location>
        <topology evidence="1">Multi-pass membrane protein</topology>
    </subcellularLocation>
</comment>
<comment type="similarity">
    <text evidence="1">Belongs to the OXA1/ALB3/YidC family. Type 1 subfamily.</text>
</comment>
<gene>
    <name evidence="1" type="primary">yidC</name>
    <name type="ordered locus">VIBHAR_00436</name>
</gene>
<accession>A7N0X9</accession>
<keyword id="KW-0997">Cell inner membrane</keyword>
<keyword id="KW-1003">Cell membrane</keyword>
<keyword id="KW-0143">Chaperone</keyword>
<keyword id="KW-0472">Membrane</keyword>
<keyword id="KW-0653">Protein transport</keyword>
<keyword id="KW-0812">Transmembrane</keyword>
<keyword id="KW-1133">Transmembrane helix</keyword>
<keyword id="KW-0813">Transport</keyword>
<evidence type="ECO:0000255" key="1">
    <source>
        <dbReference type="HAMAP-Rule" id="MF_01810"/>
    </source>
</evidence>
<evidence type="ECO:0000256" key="2">
    <source>
        <dbReference type="SAM" id="MobiDB-lite"/>
    </source>
</evidence>
<protein>
    <recommendedName>
        <fullName evidence="1">Membrane protein insertase YidC</fullName>
    </recommendedName>
    <alternativeName>
        <fullName evidence="1">Foldase YidC</fullName>
    </alternativeName>
    <alternativeName>
        <fullName evidence="1">Membrane integrase YidC</fullName>
    </alternativeName>
    <alternativeName>
        <fullName evidence="1">Membrane protein YidC</fullName>
    </alternativeName>
</protein>
<organism>
    <name type="scientific">Vibrio campbellii (strain ATCC BAA-1116)</name>
    <dbReference type="NCBI Taxonomy" id="2902295"/>
    <lineage>
        <taxon>Bacteria</taxon>
        <taxon>Pseudomonadati</taxon>
        <taxon>Pseudomonadota</taxon>
        <taxon>Gammaproteobacteria</taxon>
        <taxon>Vibrionales</taxon>
        <taxon>Vibrionaceae</taxon>
        <taxon>Vibrio</taxon>
    </lineage>
</organism>
<name>YIDC_VIBC1</name>
<proteinExistence type="inferred from homology"/>
<reference key="1">
    <citation type="submission" date="2007-08" db="EMBL/GenBank/DDBJ databases">
        <authorList>
            <consortium name="The Vibrio harveyi Genome Sequencing Project"/>
            <person name="Bassler B."/>
            <person name="Clifton S.W."/>
            <person name="Fulton L."/>
            <person name="Delehaunty K."/>
            <person name="Fronick C."/>
            <person name="Harrison M."/>
            <person name="Markivic C."/>
            <person name="Fulton R."/>
            <person name="Tin-Wollam A.-M."/>
            <person name="Shah N."/>
            <person name="Pepin K."/>
            <person name="Nash W."/>
            <person name="Thiruvilangam P."/>
            <person name="Bhonagiri V."/>
            <person name="Waters C."/>
            <person name="Tu K.C."/>
            <person name="Irgon J."/>
            <person name="Wilson R.K."/>
        </authorList>
    </citation>
    <scope>NUCLEOTIDE SEQUENCE [LARGE SCALE GENOMIC DNA]</scope>
    <source>
        <strain>ATCC BAA-1116 / BB120</strain>
    </source>
</reference>
<feature type="chain" id="PRO_1000070187" description="Membrane protein insertase YidC">
    <location>
        <begin position="1"/>
        <end position="540"/>
    </location>
</feature>
<feature type="transmembrane region" description="Helical" evidence="1">
    <location>
        <begin position="6"/>
        <end position="26"/>
    </location>
</feature>
<feature type="transmembrane region" description="Helical" evidence="1">
    <location>
        <begin position="342"/>
        <end position="362"/>
    </location>
</feature>
<feature type="transmembrane region" description="Helical" evidence="1">
    <location>
        <begin position="417"/>
        <end position="437"/>
    </location>
</feature>
<feature type="transmembrane region" description="Helical" evidence="1">
    <location>
        <begin position="455"/>
        <end position="475"/>
    </location>
</feature>
<feature type="transmembrane region" description="Helical" evidence="1">
    <location>
        <begin position="496"/>
        <end position="516"/>
    </location>
</feature>
<feature type="region of interest" description="Disordered" evidence="2">
    <location>
        <begin position="36"/>
        <end position="63"/>
    </location>
</feature>